<protein>
    <recommendedName>
        <fullName evidence="1">Phosphopantetheine adenylyltransferase</fullName>
        <ecNumber evidence="1">2.7.7.3</ecNumber>
    </recommendedName>
    <alternativeName>
        <fullName evidence="1">Dephospho-CoA pyrophosphorylase</fullName>
    </alternativeName>
    <alternativeName>
        <fullName evidence="1">Pantetheine-phosphate adenylyltransferase</fullName>
        <shortName evidence="1">PPAT</shortName>
    </alternativeName>
</protein>
<gene>
    <name evidence="1" type="primary">coaD</name>
    <name type="ordered locus">NWMN_0988</name>
</gene>
<reference key="1">
    <citation type="journal article" date="2008" name="J. Bacteriol.">
        <title>Genome sequence of Staphylococcus aureus strain Newman and comparative analysis of staphylococcal genomes: polymorphism and evolution of two major pathogenicity islands.</title>
        <authorList>
            <person name="Baba T."/>
            <person name="Bae T."/>
            <person name="Schneewind O."/>
            <person name="Takeuchi F."/>
            <person name="Hiramatsu K."/>
        </authorList>
    </citation>
    <scope>NUCLEOTIDE SEQUENCE [LARGE SCALE GENOMIC DNA]</scope>
    <source>
        <strain>Newman</strain>
    </source>
</reference>
<feature type="chain" id="PRO_1000071524" description="Phosphopantetheine adenylyltransferase">
    <location>
        <begin position="1"/>
        <end position="160"/>
    </location>
</feature>
<feature type="binding site" evidence="1">
    <location>
        <begin position="11"/>
        <end position="12"/>
    </location>
    <ligand>
        <name>ATP</name>
        <dbReference type="ChEBI" id="CHEBI:30616"/>
    </ligand>
</feature>
<feature type="binding site" evidence="1">
    <location>
        <position position="11"/>
    </location>
    <ligand>
        <name>substrate</name>
    </ligand>
</feature>
<feature type="binding site" evidence="1">
    <location>
        <position position="19"/>
    </location>
    <ligand>
        <name>ATP</name>
        <dbReference type="ChEBI" id="CHEBI:30616"/>
    </ligand>
</feature>
<feature type="binding site" evidence="1">
    <location>
        <position position="43"/>
    </location>
    <ligand>
        <name>substrate</name>
    </ligand>
</feature>
<feature type="binding site" evidence="1">
    <location>
        <position position="75"/>
    </location>
    <ligand>
        <name>substrate</name>
    </ligand>
</feature>
<feature type="binding site" evidence="1">
    <location>
        <position position="89"/>
    </location>
    <ligand>
        <name>substrate</name>
    </ligand>
</feature>
<feature type="binding site" evidence="1">
    <location>
        <begin position="90"/>
        <end position="92"/>
    </location>
    <ligand>
        <name>ATP</name>
        <dbReference type="ChEBI" id="CHEBI:30616"/>
    </ligand>
</feature>
<feature type="binding site" evidence="1">
    <location>
        <position position="100"/>
    </location>
    <ligand>
        <name>ATP</name>
        <dbReference type="ChEBI" id="CHEBI:30616"/>
    </ligand>
</feature>
<feature type="binding site" evidence="1">
    <location>
        <begin position="125"/>
        <end position="131"/>
    </location>
    <ligand>
        <name>ATP</name>
        <dbReference type="ChEBI" id="CHEBI:30616"/>
    </ligand>
</feature>
<feature type="site" description="Transition state stabilizer" evidence="1">
    <location>
        <position position="19"/>
    </location>
</feature>
<name>COAD_STAAE</name>
<organism>
    <name type="scientific">Staphylococcus aureus (strain Newman)</name>
    <dbReference type="NCBI Taxonomy" id="426430"/>
    <lineage>
        <taxon>Bacteria</taxon>
        <taxon>Bacillati</taxon>
        <taxon>Bacillota</taxon>
        <taxon>Bacilli</taxon>
        <taxon>Bacillales</taxon>
        <taxon>Staphylococcaceae</taxon>
        <taxon>Staphylococcus</taxon>
    </lineage>
</organism>
<accession>A6QFX8</accession>
<comment type="function">
    <text evidence="1">Reversibly transfers an adenylyl group from ATP to 4'-phosphopantetheine, yielding dephospho-CoA (dPCoA) and pyrophosphate.</text>
</comment>
<comment type="catalytic activity">
    <reaction evidence="1">
        <text>(R)-4'-phosphopantetheine + ATP + H(+) = 3'-dephospho-CoA + diphosphate</text>
        <dbReference type="Rhea" id="RHEA:19801"/>
        <dbReference type="ChEBI" id="CHEBI:15378"/>
        <dbReference type="ChEBI" id="CHEBI:30616"/>
        <dbReference type="ChEBI" id="CHEBI:33019"/>
        <dbReference type="ChEBI" id="CHEBI:57328"/>
        <dbReference type="ChEBI" id="CHEBI:61723"/>
        <dbReference type="EC" id="2.7.7.3"/>
    </reaction>
</comment>
<comment type="cofactor">
    <cofactor evidence="1">
        <name>Mg(2+)</name>
        <dbReference type="ChEBI" id="CHEBI:18420"/>
    </cofactor>
</comment>
<comment type="pathway">
    <text evidence="1">Cofactor biosynthesis; coenzyme A biosynthesis; CoA from (R)-pantothenate: step 4/5.</text>
</comment>
<comment type="subunit">
    <text evidence="1">Homohexamer.</text>
</comment>
<comment type="subcellular location">
    <subcellularLocation>
        <location evidence="1">Cytoplasm</location>
    </subcellularLocation>
</comment>
<comment type="similarity">
    <text evidence="1">Belongs to the bacterial CoaD family.</text>
</comment>
<proteinExistence type="inferred from homology"/>
<dbReference type="EC" id="2.7.7.3" evidence="1"/>
<dbReference type="EMBL" id="AP009351">
    <property type="protein sequence ID" value="BAF67260.1"/>
    <property type="molecule type" value="Genomic_DNA"/>
</dbReference>
<dbReference type="RefSeq" id="WP_000401377.1">
    <property type="nucleotide sequence ID" value="NZ_JBBIAE010000002.1"/>
</dbReference>
<dbReference type="SMR" id="A6QFX8"/>
<dbReference type="GeneID" id="98345441"/>
<dbReference type="KEGG" id="sae:NWMN_0988"/>
<dbReference type="HOGENOM" id="CLU_100149_0_1_9"/>
<dbReference type="UniPathway" id="UPA00241">
    <property type="reaction ID" value="UER00355"/>
</dbReference>
<dbReference type="Proteomes" id="UP000006386">
    <property type="component" value="Chromosome"/>
</dbReference>
<dbReference type="GO" id="GO:0005737">
    <property type="term" value="C:cytoplasm"/>
    <property type="evidence" value="ECO:0007669"/>
    <property type="project" value="UniProtKB-SubCell"/>
</dbReference>
<dbReference type="GO" id="GO:0005524">
    <property type="term" value="F:ATP binding"/>
    <property type="evidence" value="ECO:0007669"/>
    <property type="project" value="UniProtKB-KW"/>
</dbReference>
<dbReference type="GO" id="GO:0004595">
    <property type="term" value="F:pantetheine-phosphate adenylyltransferase activity"/>
    <property type="evidence" value="ECO:0007669"/>
    <property type="project" value="UniProtKB-UniRule"/>
</dbReference>
<dbReference type="GO" id="GO:0015937">
    <property type="term" value="P:coenzyme A biosynthetic process"/>
    <property type="evidence" value="ECO:0007669"/>
    <property type="project" value="UniProtKB-UniRule"/>
</dbReference>
<dbReference type="CDD" id="cd02163">
    <property type="entry name" value="PPAT"/>
    <property type="match status" value="1"/>
</dbReference>
<dbReference type="Gene3D" id="3.40.50.620">
    <property type="entry name" value="HUPs"/>
    <property type="match status" value="1"/>
</dbReference>
<dbReference type="HAMAP" id="MF_00151">
    <property type="entry name" value="PPAT_bact"/>
    <property type="match status" value="1"/>
</dbReference>
<dbReference type="InterPro" id="IPR004821">
    <property type="entry name" value="Cyt_trans-like"/>
</dbReference>
<dbReference type="InterPro" id="IPR001980">
    <property type="entry name" value="PPAT"/>
</dbReference>
<dbReference type="InterPro" id="IPR014729">
    <property type="entry name" value="Rossmann-like_a/b/a_fold"/>
</dbReference>
<dbReference type="NCBIfam" id="TIGR01510">
    <property type="entry name" value="coaD_prev_kdtB"/>
    <property type="match status" value="1"/>
</dbReference>
<dbReference type="NCBIfam" id="TIGR00125">
    <property type="entry name" value="cyt_tran_rel"/>
    <property type="match status" value="1"/>
</dbReference>
<dbReference type="PANTHER" id="PTHR21342">
    <property type="entry name" value="PHOSPHOPANTETHEINE ADENYLYLTRANSFERASE"/>
    <property type="match status" value="1"/>
</dbReference>
<dbReference type="PANTHER" id="PTHR21342:SF1">
    <property type="entry name" value="PHOSPHOPANTETHEINE ADENYLYLTRANSFERASE"/>
    <property type="match status" value="1"/>
</dbReference>
<dbReference type="Pfam" id="PF01467">
    <property type="entry name" value="CTP_transf_like"/>
    <property type="match status" value="1"/>
</dbReference>
<dbReference type="PRINTS" id="PR01020">
    <property type="entry name" value="LPSBIOSNTHSS"/>
</dbReference>
<dbReference type="SUPFAM" id="SSF52374">
    <property type="entry name" value="Nucleotidylyl transferase"/>
    <property type="match status" value="1"/>
</dbReference>
<evidence type="ECO:0000255" key="1">
    <source>
        <dbReference type="HAMAP-Rule" id="MF_00151"/>
    </source>
</evidence>
<sequence>MEHTIAVIPGSFDPITYGHLDIIERSTDRFDEIHVCVLKNSKKEGTFSLEERMDLIEQSVKHLPNVKVHQFSGLLVDYCEQVGAKTIIRGLRAVSDFEYELRLTSMNKKLNNEIETLYMMSSTNYSFISSSIVKEVAAYRADISEFVPPYVEKALKKKFK</sequence>
<keyword id="KW-0067">ATP-binding</keyword>
<keyword id="KW-0173">Coenzyme A biosynthesis</keyword>
<keyword id="KW-0963">Cytoplasm</keyword>
<keyword id="KW-0460">Magnesium</keyword>
<keyword id="KW-0547">Nucleotide-binding</keyword>
<keyword id="KW-0548">Nucleotidyltransferase</keyword>
<keyword id="KW-0808">Transferase</keyword>